<feature type="chain" id="PRO_0000068551" description="Aminoglycoside N(3)-acetyltransferase IX">
    <location>
        <begin position="1"/>
        <end position="281"/>
    </location>
</feature>
<organism>
    <name type="scientific">Micromonospora chalcea</name>
    <dbReference type="NCBI Taxonomy" id="1874"/>
    <lineage>
        <taxon>Bacteria</taxon>
        <taxon>Bacillati</taxon>
        <taxon>Actinomycetota</taxon>
        <taxon>Actinomycetes</taxon>
        <taxon>Micromonosporales</taxon>
        <taxon>Micromonosporaceae</taxon>
        <taxon>Micromonospora</taxon>
    </lineage>
</organism>
<dbReference type="EC" id="2.3.1.81"/>
<dbReference type="EMBL" id="M55427">
    <property type="protein sequence ID" value="AAA25334.1"/>
    <property type="molecule type" value="Genomic_DNA"/>
</dbReference>
<dbReference type="PIR" id="JE0418">
    <property type="entry name" value="JE0418"/>
</dbReference>
<dbReference type="RefSeq" id="WP_063840269.1">
    <property type="nucleotide sequence ID" value="NG_047255.1"/>
</dbReference>
<dbReference type="SMR" id="P29810"/>
<dbReference type="CARD" id="ARO:3002543">
    <property type="molecule name" value="AAC(3)-IXa"/>
    <property type="mechanism identifier" value="ARO:0001004"/>
    <property type="mechanism name" value="antibiotic inactivation"/>
</dbReference>
<dbReference type="KEGG" id="ag:AAA25334"/>
<dbReference type="GO" id="GO:0046353">
    <property type="term" value="F:aminoglycoside 3-N-acetyltransferase activity"/>
    <property type="evidence" value="ECO:0007669"/>
    <property type="project" value="UniProtKB-EC"/>
</dbReference>
<dbReference type="GO" id="GO:0046677">
    <property type="term" value="P:response to antibiotic"/>
    <property type="evidence" value="ECO:0007669"/>
    <property type="project" value="UniProtKB-KW"/>
</dbReference>
<dbReference type="InterPro" id="IPR003679">
    <property type="entry name" value="Amioglycoside_AcTrfase"/>
</dbReference>
<dbReference type="InterPro" id="IPR028345">
    <property type="entry name" value="Antibiotic_NAT-like"/>
</dbReference>
<dbReference type="NCBIfam" id="NF033082">
    <property type="entry name" value="AAC_3"/>
    <property type="match status" value="1"/>
</dbReference>
<dbReference type="PANTHER" id="PTHR11104">
    <property type="entry name" value="AMINOGLYCOSIDE N3-ACETYLTRANSFERASE"/>
    <property type="match status" value="1"/>
</dbReference>
<dbReference type="PANTHER" id="PTHR11104:SF0">
    <property type="entry name" value="SPBETA PROPHAGE-DERIVED AMINOGLYCOSIDE N(3')-ACETYLTRANSFERASE-LIKE PROTEIN YOKD"/>
    <property type="match status" value="1"/>
</dbReference>
<dbReference type="Pfam" id="PF02522">
    <property type="entry name" value="Antibiotic_NAT"/>
    <property type="match status" value="1"/>
</dbReference>
<dbReference type="SUPFAM" id="SSF110710">
    <property type="entry name" value="TTHA0583/YokD-like"/>
    <property type="match status" value="1"/>
</dbReference>
<accession>P29810</accession>
<name>AACC9_MICCH</name>
<evidence type="ECO:0000305" key="1"/>
<proteinExistence type="inferred from homology"/>
<protein>
    <recommendedName>
        <fullName>Aminoglycoside N(3)-acetyltransferase IX</fullName>
        <ecNumber>2.3.1.81</ecNumber>
    </recommendedName>
    <alternativeName>
        <fullName>ACC(3)-IX</fullName>
    </alternativeName>
    <alternativeName>
        <fullName>Aminocyclitol 3-N-acetyltransferase type IX</fullName>
    </alternativeName>
</protein>
<comment type="function">
    <text>Resistance to neomycin.</text>
</comment>
<comment type="catalytic activity">
    <reaction>
        <text>a 2-deoxystreptamine antibiotic + acetyl-CoA = an N(3)-acetyl-2-deoxystreptamine antibiotic + CoA + H(+)</text>
        <dbReference type="Rhea" id="RHEA:12665"/>
        <dbReference type="ChEBI" id="CHEBI:15378"/>
        <dbReference type="ChEBI" id="CHEBI:57287"/>
        <dbReference type="ChEBI" id="CHEBI:57288"/>
        <dbReference type="ChEBI" id="CHEBI:57921"/>
        <dbReference type="ChEBI" id="CHEBI:77452"/>
        <dbReference type="EC" id="2.3.1.81"/>
    </reaction>
</comment>
<comment type="similarity">
    <text evidence="1">Belongs to the antibiotic N-acetyltransferase family.</text>
</comment>
<keyword id="KW-0012">Acyltransferase</keyword>
<keyword id="KW-0046">Antibiotic resistance</keyword>
<keyword id="KW-0808">Transferase</keyword>
<reference key="1">
    <citation type="journal article" date="1991" name="Gene">
        <title>Characterisation of aminoglycoside acetyltransferase-encoding genes of neomycin-producing Micromonospora chalcea and Streptomyces fradiae.</title>
        <authorList>
            <person name="Salauze D."/>
            <person name="Perez-Gonzalez J.A."/>
            <person name="Piepersberg W."/>
            <person name="Davies J."/>
        </authorList>
    </citation>
    <scope>NUCLEOTIDE SEQUENCE [GENOMIC DNA]</scope>
    <source>
        <strain>69-683</strain>
    </source>
</reference>
<sequence>MEEMSLLNHSGGPVTRSRIKHDLADLGLKDGDVVIFHTRMSAIGYVAGGTQTIIGALLDVVGARGTLMVPCGWNNAPPYDFLDWPRDWQDALRAEHPAYDPDLSEADYNNGRLPEALPRWPGAIRSRHPDASFAALGPAAAELMAEHPWDHPHGPDTPLARLIAHSGRVLLLGAPLDTMTLLHHAEALADVRSKRFVTYEQPILVNGQRVWRQFRDIDSEEGAFDYSTVRRGVEPFEAIARDMLSAGIGRQGRVGAADSYLFDAGPVFNFAINWIEAKLKR</sequence>
<gene>
    <name type="primary">aacC9</name>
</gene>